<name>ENO_ALIFM</name>
<organism>
    <name type="scientific">Aliivibrio fischeri (strain MJ11)</name>
    <name type="common">Vibrio fischeri</name>
    <dbReference type="NCBI Taxonomy" id="388396"/>
    <lineage>
        <taxon>Bacteria</taxon>
        <taxon>Pseudomonadati</taxon>
        <taxon>Pseudomonadota</taxon>
        <taxon>Gammaproteobacteria</taxon>
        <taxon>Vibrionales</taxon>
        <taxon>Vibrionaceae</taxon>
        <taxon>Aliivibrio</taxon>
    </lineage>
</organism>
<proteinExistence type="inferred from homology"/>
<accession>B5FAF9</accession>
<feature type="chain" id="PRO_1000115931" description="Enolase">
    <location>
        <begin position="1"/>
        <end position="432"/>
    </location>
</feature>
<feature type="active site" description="Proton donor" evidence="1">
    <location>
        <position position="209"/>
    </location>
</feature>
<feature type="active site" description="Proton acceptor" evidence="1">
    <location>
        <position position="343"/>
    </location>
</feature>
<feature type="binding site" evidence="1">
    <location>
        <position position="167"/>
    </location>
    <ligand>
        <name>(2R)-2-phosphoglycerate</name>
        <dbReference type="ChEBI" id="CHEBI:58289"/>
    </ligand>
</feature>
<feature type="binding site" evidence="1">
    <location>
        <position position="246"/>
    </location>
    <ligand>
        <name>Mg(2+)</name>
        <dbReference type="ChEBI" id="CHEBI:18420"/>
    </ligand>
</feature>
<feature type="binding site" evidence="1">
    <location>
        <position position="291"/>
    </location>
    <ligand>
        <name>Mg(2+)</name>
        <dbReference type="ChEBI" id="CHEBI:18420"/>
    </ligand>
</feature>
<feature type="binding site" evidence="1">
    <location>
        <position position="318"/>
    </location>
    <ligand>
        <name>Mg(2+)</name>
        <dbReference type="ChEBI" id="CHEBI:18420"/>
    </ligand>
</feature>
<feature type="binding site" evidence="1">
    <location>
        <position position="343"/>
    </location>
    <ligand>
        <name>(2R)-2-phosphoglycerate</name>
        <dbReference type="ChEBI" id="CHEBI:58289"/>
    </ligand>
</feature>
<feature type="binding site" evidence="1">
    <location>
        <position position="372"/>
    </location>
    <ligand>
        <name>(2R)-2-phosphoglycerate</name>
        <dbReference type="ChEBI" id="CHEBI:58289"/>
    </ligand>
</feature>
<feature type="binding site" evidence="1">
    <location>
        <position position="373"/>
    </location>
    <ligand>
        <name>(2R)-2-phosphoglycerate</name>
        <dbReference type="ChEBI" id="CHEBI:58289"/>
    </ligand>
</feature>
<feature type="binding site" evidence="1">
    <location>
        <position position="394"/>
    </location>
    <ligand>
        <name>(2R)-2-phosphoglycerate</name>
        <dbReference type="ChEBI" id="CHEBI:58289"/>
    </ligand>
</feature>
<reference key="1">
    <citation type="submission" date="2008-08" db="EMBL/GenBank/DDBJ databases">
        <title>Complete sequence of Vibrio fischeri strain MJ11.</title>
        <authorList>
            <person name="Mandel M.J."/>
            <person name="Stabb E.V."/>
            <person name="Ruby E.G."/>
            <person name="Ferriera S."/>
            <person name="Johnson J."/>
            <person name="Kravitz S."/>
            <person name="Beeson K."/>
            <person name="Sutton G."/>
            <person name="Rogers Y.-H."/>
            <person name="Friedman R."/>
            <person name="Frazier M."/>
            <person name="Venter J.C."/>
        </authorList>
    </citation>
    <scope>NUCLEOTIDE SEQUENCE [LARGE SCALE GENOMIC DNA]</scope>
    <source>
        <strain>MJ11</strain>
    </source>
</reference>
<keyword id="KW-0963">Cytoplasm</keyword>
<keyword id="KW-0324">Glycolysis</keyword>
<keyword id="KW-0456">Lyase</keyword>
<keyword id="KW-0460">Magnesium</keyword>
<keyword id="KW-0479">Metal-binding</keyword>
<keyword id="KW-0964">Secreted</keyword>
<gene>
    <name evidence="1" type="primary">eno</name>
    <name type="ordered locus">VFMJ11_2181</name>
</gene>
<evidence type="ECO:0000255" key="1">
    <source>
        <dbReference type="HAMAP-Rule" id="MF_00318"/>
    </source>
</evidence>
<protein>
    <recommendedName>
        <fullName evidence="1">Enolase</fullName>
        <ecNumber evidence="1">4.2.1.11</ecNumber>
    </recommendedName>
    <alternativeName>
        <fullName evidence="1">2-phospho-D-glycerate hydro-lyase</fullName>
    </alternativeName>
    <alternativeName>
        <fullName evidence="1">2-phosphoglycerate dehydratase</fullName>
    </alternativeName>
</protein>
<dbReference type="EC" id="4.2.1.11" evidence="1"/>
<dbReference type="EMBL" id="CP001139">
    <property type="protein sequence ID" value="ACH66946.1"/>
    <property type="molecule type" value="Genomic_DNA"/>
</dbReference>
<dbReference type="RefSeq" id="WP_005420700.1">
    <property type="nucleotide sequence ID" value="NC_011184.1"/>
</dbReference>
<dbReference type="SMR" id="B5FAF9"/>
<dbReference type="KEGG" id="vfm:VFMJ11_2181"/>
<dbReference type="HOGENOM" id="CLU_031223_2_1_6"/>
<dbReference type="UniPathway" id="UPA00109">
    <property type="reaction ID" value="UER00187"/>
</dbReference>
<dbReference type="Proteomes" id="UP000001857">
    <property type="component" value="Chromosome I"/>
</dbReference>
<dbReference type="GO" id="GO:0009986">
    <property type="term" value="C:cell surface"/>
    <property type="evidence" value="ECO:0007669"/>
    <property type="project" value="UniProtKB-SubCell"/>
</dbReference>
<dbReference type="GO" id="GO:0005576">
    <property type="term" value="C:extracellular region"/>
    <property type="evidence" value="ECO:0007669"/>
    <property type="project" value="UniProtKB-SubCell"/>
</dbReference>
<dbReference type="GO" id="GO:0000015">
    <property type="term" value="C:phosphopyruvate hydratase complex"/>
    <property type="evidence" value="ECO:0007669"/>
    <property type="project" value="InterPro"/>
</dbReference>
<dbReference type="GO" id="GO:0000287">
    <property type="term" value="F:magnesium ion binding"/>
    <property type="evidence" value="ECO:0007669"/>
    <property type="project" value="UniProtKB-UniRule"/>
</dbReference>
<dbReference type="GO" id="GO:0004634">
    <property type="term" value="F:phosphopyruvate hydratase activity"/>
    <property type="evidence" value="ECO:0007669"/>
    <property type="project" value="UniProtKB-UniRule"/>
</dbReference>
<dbReference type="GO" id="GO:0006096">
    <property type="term" value="P:glycolytic process"/>
    <property type="evidence" value="ECO:0007669"/>
    <property type="project" value="UniProtKB-UniRule"/>
</dbReference>
<dbReference type="CDD" id="cd03313">
    <property type="entry name" value="enolase"/>
    <property type="match status" value="1"/>
</dbReference>
<dbReference type="FunFam" id="3.20.20.120:FF:000001">
    <property type="entry name" value="Enolase"/>
    <property type="match status" value="1"/>
</dbReference>
<dbReference type="FunFam" id="3.30.390.10:FF:000001">
    <property type="entry name" value="Enolase"/>
    <property type="match status" value="1"/>
</dbReference>
<dbReference type="Gene3D" id="3.20.20.120">
    <property type="entry name" value="Enolase-like C-terminal domain"/>
    <property type="match status" value="1"/>
</dbReference>
<dbReference type="Gene3D" id="3.30.390.10">
    <property type="entry name" value="Enolase-like, N-terminal domain"/>
    <property type="match status" value="1"/>
</dbReference>
<dbReference type="HAMAP" id="MF_00318">
    <property type="entry name" value="Enolase"/>
    <property type="match status" value="1"/>
</dbReference>
<dbReference type="InterPro" id="IPR000941">
    <property type="entry name" value="Enolase"/>
</dbReference>
<dbReference type="InterPro" id="IPR036849">
    <property type="entry name" value="Enolase-like_C_sf"/>
</dbReference>
<dbReference type="InterPro" id="IPR029017">
    <property type="entry name" value="Enolase-like_N"/>
</dbReference>
<dbReference type="InterPro" id="IPR020810">
    <property type="entry name" value="Enolase_C"/>
</dbReference>
<dbReference type="InterPro" id="IPR020809">
    <property type="entry name" value="Enolase_CS"/>
</dbReference>
<dbReference type="InterPro" id="IPR020811">
    <property type="entry name" value="Enolase_N"/>
</dbReference>
<dbReference type="NCBIfam" id="TIGR01060">
    <property type="entry name" value="eno"/>
    <property type="match status" value="1"/>
</dbReference>
<dbReference type="PANTHER" id="PTHR11902">
    <property type="entry name" value="ENOLASE"/>
    <property type="match status" value="1"/>
</dbReference>
<dbReference type="PANTHER" id="PTHR11902:SF1">
    <property type="entry name" value="ENOLASE"/>
    <property type="match status" value="1"/>
</dbReference>
<dbReference type="Pfam" id="PF00113">
    <property type="entry name" value="Enolase_C"/>
    <property type="match status" value="1"/>
</dbReference>
<dbReference type="Pfam" id="PF03952">
    <property type="entry name" value="Enolase_N"/>
    <property type="match status" value="1"/>
</dbReference>
<dbReference type="PIRSF" id="PIRSF001400">
    <property type="entry name" value="Enolase"/>
    <property type="match status" value="1"/>
</dbReference>
<dbReference type="PRINTS" id="PR00148">
    <property type="entry name" value="ENOLASE"/>
</dbReference>
<dbReference type="SFLD" id="SFLDS00001">
    <property type="entry name" value="Enolase"/>
    <property type="match status" value="1"/>
</dbReference>
<dbReference type="SFLD" id="SFLDF00002">
    <property type="entry name" value="enolase"/>
    <property type="match status" value="1"/>
</dbReference>
<dbReference type="SMART" id="SM01192">
    <property type="entry name" value="Enolase_C"/>
    <property type="match status" value="1"/>
</dbReference>
<dbReference type="SMART" id="SM01193">
    <property type="entry name" value="Enolase_N"/>
    <property type="match status" value="1"/>
</dbReference>
<dbReference type="SUPFAM" id="SSF51604">
    <property type="entry name" value="Enolase C-terminal domain-like"/>
    <property type="match status" value="1"/>
</dbReference>
<dbReference type="SUPFAM" id="SSF54826">
    <property type="entry name" value="Enolase N-terminal domain-like"/>
    <property type="match status" value="1"/>
</dbReference>
<dbReference type="PROSITE" id="PS00164">
    <property type="entry name" value="ENOLASE"/>
    <property type="match status" value="1"/>
</dbReference>
<comment type="function">
    <text evidence="1">Catalyzes the reversible conversion of 2-phosphoglycerate (2-PG) into phosphoenolpyruvate (PEP). It is essential for the degradation of carbohydrates via glycolysis.</text>
</comment>
<comment type="catalytic activity">
    <reaction evidence="1">
        <text>(2R)-2-phosphoglycerate = phosphoenolpyruvate + H2O</text>
        <dbReference type="Rhea" id="RHEA:10164"/>
        <dbReference type="ChEBI" id="CHEBI:15377"/>
        <dbReference type="ChEBI" id="CHEBI:58289"/>
        <dbReference type="ChEBI" id="CHEBI:58702"/>
        <dbReference type="EC" id="4.2.1.11"/>
    </reaction>
</comment>
<comment type="cofactor">
    <cofactor evidence="1">
        <name>Mg(2+)</name>
        <dbReference type="ChEBI" id="CHEBI:18420"/>
    </cofactor>
    <text evidence="1">Binds a second Mg(2+) ion via substrate during catalysis.</text>
</comment>
<comment type="pathway">
    <text evidence="1">Carbohydrate degradation; glycolysis; pyruvate from D-glyceraldehyde 3-phosphate: step 4/5.</text>
</comment>
<comment type="subunit">
    <text evidence="1">Component of the RNA degradosome, a multiprotein complex involved in RNA processing and mRNA degradation.</text>
</comment>
<comment type="subcellular location">
    <subcellularLocation>
        <location evidence="1">Cytoplasm</location>
    </subcellularLocation>
    <subcellularLocation>
        <location evidence="1">Secreted</location>
    </subcellularLocation>
    <subcellularLocation>
        <location evidence="1">Cell surface</location>
    </subcellularLocation>
    <text evidence="1">Fractions of enolase are present in both the cytoplasm and on the cell surface.</text>
</comment>
<comment type="similarity">
    <text evidence="1">Belongs to the enolase family.</text>
</comment>
<sequence length="432" mass="45515">MSKIVKVLGREIIDSRGNPTVEAEVHLESGFVGMAAAPSGASTGSREALELRDGDKARFLGKGVLKAVAAVNGPIAEALIGKDAKNQAEIDQIMIDLDGTDNKANFGANAILAVSLANAKAAAAAKSMPLYAHIAELNGTPGVFSMPLPMMNIINGGEHADNNVDIQEFMIQPVGAKTLKEGLRIGAEVFHNLAKVLKSKGYSTAVGDEGGFAPNLKSNAEALEVIAEAVAAAGYELGKDVTLAMDCAASEFFDKEAGIYNMKGEGKTFTSEEFNHYLAELANQFPIVSIEDGLDESDWAGFKHQTELLGDKLQLVGDDLFVTNTKILAEGIEKGVANSILIKFNQIGSLTETLAAIKMAKDAGYTAVISHRSGETEDATIADLAVGTAAGQIKTGSMSRSDRVAKYNQLIRIEEALGEKAPFNGLKEVKGQ</sequence>